<keyword id="KW-0030">Aminoacyl-tRNA synthetase</keyword>
<keyword id="KW-0067">ATP-binding</keyword>
<keyword id="KW-0963">Cytoplasm</keyword>
<keyword id="KW-0436">Ligase</keyword>
<keyword id="KW-0547">Nucleotide-binding</keyword>
<keyword id="KW-0648">Protein biosynthesis</keyword>
<proteinExistence type="inferred from homology"/>
<sequence>MHRYRTHTCGAIRPSDVGQTVRLSGWCHRIRDHGGVLFIDLRDHYGLTQCVIDSDSKAFKAAETARSEWVIRIDGRVRTRPAGTENAELPTGSVEVYIDDLEVLGPAGELPLPVFGDQEYPEETRLKYRFLDLRREKLHANIMKRGAIVDSLRRRMREGGFFEFQTPILTASSPEGARDYLVPSRVHPGKFYALPQAPQQFKQLTMIAGFDRYFQIAPCFRDEDARADRSPGEFYQLDIEMSFVTQEDVFQAVEPVLRGVFEEFAGGKRVTKEFPRITYADAMLKYGVDKPDLRNPLIIADVTDEFADDAVEFKAFKGVIKSGGVVRAIPATGAAGQPRSFFDKLNDWARSEGAPGLGYIVFEEEGGALTGKGPIAKFIPAAIQARIAEKAGAKAGDAVFFAAGTEAKAAGLAGKARIRIGDELKLSDTDQFAFCWVVDFPMYEWNEEDKKIDFSHNPFSMPNFDRDEFLALGEADSEKILGIKAFQYDIVCNGIELSSGAIRNHRPDVMEKAFAIAGYGRDVLEEKFGGMLNALRLGAPPHGGIAPGVDRIVMLLCEEPNIREVVLFPMNQRAEDLMMGAPAEATPKQLRELHIRLNLPEKKA</sequence>
<feature type="chain" id="PRO_1000198998" description="Aspartate--tRNA(Asp/Asn) ligase">
    <location>
        <begin position="1"/>
        <end position="604"/>
    </location>
</feature>
<feature type="region of interest" description="Aspartate" evidence="1">
    <location>
        <begin position="199"/>
        <end position="202"/>
    </location>
</feature>
<feature type="binding site" evidence="1">
    <location>
        <position position="175"/>
    </location>
    <ligand>
        <name>L-aspartate</name>
        <dbReference type="ChEBI" id="CHEBI:29991"/>
    </ligand>
</feature>
<feature type="binding site" evidence="1">
    <location>
        <begin position="221"/>
        <end position="223"/>
    </location>
    <ligand>
        <name>ATP</name>
        <dbReference type="ChEBI" id="CHEBI:30616"/>
    </ligand>
</feature>
<feature type="binding site" evidence="1">
    <location>
        <position position="221"/>
    </location>
    <ligand>
        <name>L-aspartate</name>
        <dbReference type="ChEBI" id="CHEBI:29991"/>
    </ligand>
</feature>
<feature type="binding site" evidence="1">
    <location>
        <position position="456"/>
    </location>
    <ligand>
        <name>L-aspartate</name>
        <dbReference type="ChEBI" id="CHEBI:29991"/>
    </ligand>
</feature>
<feature type="binding site" evidence="1">
    <location>
        <position position="496"/>
    </location>
    <ligand>
        <name>ATP</name>
        <dbReference type="ChEBI" id="CHEBI:30616"/>
    </ligand>
</feature>
<feature type="binding site" evidence="1">
    <location>
        <position position="503"/>
    </location>
    <ligand>
        <name>L-aspartate</name>
        <dbReference type="ChEBI" id="CHEBI:29991"/>
    </ligand>
</feature>
<feature type="binding site" evidence="1">
    <location>
        <begin position="548"/>
        <end position="551"/>
    </location>
    <ligand>
        <name>ATP</name>
        <dbReference type="ChEBI" id="CHEBI:30616"/>
    </ligand>
</feature>
<feature type="site" description="Important for tRNA non-discrimination" evidence="1">
    <location>
        <position position="33"/>
    </location>
</feature>
<feature type="site" description="Important for tRNA non-discrimination" evidence="1">
    <location>
        <position position="83"/>
    </location>
</feature>
<accession>B7KN33</accession>
<reference key="1">
    <citation type="submission" date="2008-12" db="EMBL/GenBank/DDBJ databases">
        <title>Complete sequence of chromosome of Methylobacterium chloromethanicum CM4.</title>
        <authorList>
            <consortium name="US DOE Joint Genome Institute"/>
            <person name="Lucas S."/>
            <person name="Copeland A."/>
            <person name="Lapidus A."/>
            <person name="Glavina del Rio T."/>
            <person name="Dalin E."/>
            <person name="Tice H."/>
            <person name="Bruce D."/>
            <person name="Goodwin L."/>
            <person name="Pitluck S."/>
            <person name="Chertkov O."/>
            <person name="Brettin T."/>
            <person name="Detter J.C."/>
            <person name="Han C."/>
            <person name="Larimer F."/>
            <person name="Land M."/>
            <person name="Hauser L."/>
            <person name="Kyrpides N."/>
            <person name="Mikhailova N."/>
            <person name="Marx C."/>
            <person name="Richardson P."/>
        </authorList>
    </citation>
    <scope>NUCLEOTIDE SEQUENCE [LARGE SCALE GENOMIC DNA]</scope>
    <source>
        <strain>CM4 / NCIMB 13688</strain>
    </source>
</reference>
<protein>
    <recommendedName>
        <fullName evidence="1">Aspartate--tRNA(Asp/Asn) ligase</fullName>
        <ecNumber evidence="1">6.1.1.23</ecNumber>
    </recommendedName>
    <alternativeName>
        <fullName evidence="1">Aspartyl-tRNA synthetase</fullName>
        <shortName evidence="1">AspRS</shortName>
    </alternativeName>
    <alternativeName>
        <fullName evidence="1">Non-discriminating aspartyl-tRNA synthetase</fullName>
        <shortName evidence="1">ND-AspRS</shortName>
    </alternativeName>
</protein>
<gene>
    <name evidence="1" type="primary">aspS</name>
    <name type="ordered locus">Mchl_4374</name>
</gene>
<dbReference type="EC" id="6.1.1.23" evidence="1"/>
<dbReference type="EMBL" id="CP001298">
    <property type="protein sequence ID" value="ACK85150.1"/>
    <property type="molecule type" value="Genomic_DNA"/>
</dbReference>
<dbReference type="RefSeq" id="WP_015824160.1">
    <property type="nucleotide sequence ID" value="NC_011757.1"/>
</dbReference>
<dbReference type="SMR" id="B7KN33"/>
<dbReference type="GeneID" id="72991723"/>
<dbReference type="KEGG" id="mch:Mchl_4374"/>
<dbReference type="HOGENOM" id="CLU_014330_3_2_5"/>
<dbReference type="Proteomes" id="UP000002385">
    <property type="component" value="Chromosome"/>
</dbReference>
<dbReference type="GO" id="GO:0005737">
    <property type="term" value="C:cytoplasm"/>
    <property type="evidence" value="ECO:0007669"/>
    <property type="project" value="UniProtKB-SubCell"/>
</dbReference>
<dbReference type="GO" id="GO:0004815">
    <property type="term" value="F:aspartate-tRNA ligase activity"/>
    <property type="evidence" value="ECO:0007669"/>
    <property type="project" value="UniProtKB-UniRule"/>
</dbReference>
<dbReference type="GO" id="GO:0050560">
    <property type="term" value="F:aspartate-tRNA(Asn) ligase activity"/>
    <property type="evidence" value="ECO:0007669"/>
    <property type="project" value="UniProtKB-EC"/>
</dbReference>
<dbReference type="GO" id="GO:0005524">
    <property type="term" value="F:ATP binding"/>
    <property type="evidence" value="ECO:0007669"/>
    <property type="project" value="UniProtKB-UniRule"/>
</dbReference>
<dbReference type="GO" id="GO:0003676">
    <property type="term" value="F:nucleic acid binding"/>
    <property type="evidence" value="ECO:0007669"/>
    <property type="project" value="InterPro"/>
</dbReference>
<dbReference type="GO" id="GO:0006422">
    <property type="term" value="P:aspartyl-tRNA aminoacylation"/>
    <property type="evidence" value="ECO:0007669"/>
    <property type="project" value="UniProtKB-UniRule"/>
</dbReference>
<dbReference type="CDD" id="cd00777">
    <property type="entry name" value="AspRS_core"/>
    <property type="match status" value="1"/>
</dbReference>
<dbReference type="CDD" id="cd04317">
    <property type="entry name" value="EcAspRS_like_N"/>
    <property type="match status" value="1"/>
</dbReference>
<dbReference type="Gene3D" id="3.30.930.10">
    <property type="entry name" value="Bira Bifunctional Protein, Domain 2"/>
    <property type="match status" value="1"/>
</dbReference>
<dbReference type="Gene3D" id="3.30.1360.30">
    <property type="entry name" value="GAD-like domain"/>
    <property type="match status" value="1"/>
</dbReference>
<dbReference type="Gene3D" id="2.40.50.140">
    <property type="entry name" value="Nucleic acid-binding proteins"/>
    <property type="match status" value="1"/>
</dbReference>
<dbReference type="HAMAP" id="MF_00044">
    <property type="entry name" value="Asp_tRNA_synth_type1"/>
    <property type="match status" value="1"/>
</dbReference>
<dbReference type="InterPro" id="IPR004364">
    <property type="entry name" value="Aa-tRNA-synt_II"/>
</dbReference>
<dbReference type="InterPro" id="IPR006195">
    <property type="entry name" value="aa-tRNA-synth_II"/>
</dbReference>
<dbReference type="InterPro" id="IPR045864">
    <property type="entry name" value="aa-tRNA-synth_II/BPL/LPL"/>
</dbReference>
<dbReference type="InterPro" id="IPR004524">
    <property type="entry name" value="Asp-tRNA-ligase_1"/>
</dbReference>
<dbReference type="InterPro" id="IPR047089">
    <property type="entry name" value="Asp-tRNA-ligase_1_N"/>
</dbReference>
<dbReference type="InterPro" id="IPR002312">
    <property type="entry name" value="Asp/Asn-tRNA-synth_IIb"/>
</dbReference>
<dbReference type="InterPro" id="IPR047090">
    <property type="entry name" value="AspRS_core"/>
</dbReference>
<dbReference type="InterPro" id="IPR004115">
    <property type="entry name" value="GAD-like_sf"/>
</dbReference>
<dbReference type="InterPro" id="IPR029351">
    <property type="entry name" value="GAD_dom"/>
</dbReference>
<dbReference type="InterPro" id="IPR012340">
    <property type="entry name" value="NA-bd_OB-fold"/>
</dbReference>
<dbReference type="InterPro" id="IPR004365">
    <property type="entry name" value="NA-bd_OB_tRNA"/>
</dbReference>
<dbReference type="NCBIfam" id="TIGR00459">
    <property type="entry name" value="aspS_bact"/>
    <property type="match status" value="1"/>
</dbReference>
<dbReference type="NCBIfam" id="NF001750">
    <property type="entry name" value="PRK00476.1"/>
    <property type="match status" value="1"/>
</dbReference>
<dbReference type="PANTHER" id="PTHR22594:SF5">
    <property type="entry name" value="ASPARTATE--TRNA LIGASE, MITOCHONDRIAL"/>
    <property type="match status" value="1"/>
</dbReference>
<dbReference type="PANTHER" id="PTHR22594">
    <property type="entry name" value="ASPARTYL/LYSYL-TRNA SYNTHETASE"/>
    <property type="match status" value="1"/>
</dbReference>
<dbReference type="Pfam" id="PF02938">
    <property type="entry name" value="GAD"/>
    <property type="match status" value="1"/>
</dbReference>
<dbReference type="Pfam" id="PF00152">
    <property type="entry name" value="tRNA-synt_2"/>
    <property type="match status" value="1"/>
</dbReference>
<dbReference type="Pfam" id="PF01336">
    <property type="entry name" value="tRNA_anti-codon"/>
    <property type="match status" value="1"/>
</dbReference>
<dbReference type="PRINTS" id="PR01042">
    <property type="entry name" value="TRNASYNTHASP"/>
</dbReference>
<dbReference type="SUPFAM" id="SSF55681">
    <property type="entry name" value="Class II aaRS and biotin synthetases"/>
    <property type="match status" value="1"/>
</dbReference>
<dbReference type="SUPFAM" id="SSF55261">
    <property type="entry name" value="GAD domain-like"/>
    <property type="match status" value="1"/>
</dbReference>
<dbReference type="SUPFAM" id="SSF50249">
    <property type="entry name" value="Nucleic acid-binding proteins"/>
    <property type="match status" value="1"/>
</dbReference>
<dbReference type="PROSITE" id="PS50862">
    <property type="entry name" value="AA_TRNA_LIGASE_II"/>
    <property type="match status" value="1"/>
</dbReference>
<evidence type="ECO:0000255" key="1">
    <source>
        <dbReference type="HAMAP-Rule" id="MF_00044"/>
    </source>
</evidence>
<comment type="function">
    <text evidence="1">Aspartyl-tRNA synthetase with relaxed tRNA specificity since it is able to aspartylate not only its cognate tRNA(Asp) but also tRNA(Asn). Reaction proceeds in two steps: L-aspartate is first activated by ATP to form Asp-AMP and then transferred to the acceptor end of tRNA(Asp/Asn).</text>
</comment>
<comment type="catalytic activity">
    <reaction evidence="1">
        <text>tRNA(Asx) + L-aspartate + ATP = L-aspartyl-tRNA(Asx) + AMP + diphosphate</text>
        <dbReference type="Rhea" id="RHEA:18349"/>
        <dbReference type="Rhea" id="RHEA-COMP:9710"/>
        <dbReference type="Rhea" id="RHEA-COMP:9711"/>
        <dbReference type="ChEBI" id="CHEBI:29991"/>
        <dbReference type="ChEBI" id="CHEBI:30616"/>
        <dbReference type="ChEBI" id="CHEBI:33019"/>
        <dbReference type="ChEBI" id="CHEBI:78442"/>
        <dbReference type="ChEBI" id="CHEBI:78516"/>
        <dbReference type="ChEBI" id="CHEBI:456215"/>
        <dbReference type="EC" id="6.1.1.23"/>
    </reaction>
</comment>
<comment type="subunit">
    <text evidence="1">Homodimer.</text>
</comment>
<comment type="subcellular location">
    <subcellularLocation>
        <location evidence="1">Cytoplasm</location>
    </subcellularLocation>
</comment>
<comment type="similarity">
    <text evidence="1">Belongs to the class-II aminoacyl-tRNA synthetase family. Type 1 subfamily.</text>
</comment>
<organism>
    <name type="scientific">Methylorubrum extorquens (strain CM4 / NCIMB 13688)</name>
    <name type="common">Methylobacterium extorquens</name>
    <dbReference type="NCBI Taxonomy" id="440085"/>
    <lineage>
        <taxon>Bacteria</taxon>
        <taxon>Pseudomonadati</taxon>
        <taxon>Pseudomonadota</taxon>
        <taxon>Alphaproteobacteria</taxon>
        <taxon>Hyphomicrobiales</taxon>
        <taxon>Methylobacteriaceae</taxon>
        <taxon>Methylorubrum</taxon>
    </lineage>
</organism>
<name>SYDND_METC4</name>